<protein>
    <recommendedName>
        <fullName>Probable NADH-dependent butanol dehydrogenase 1</fullName>
        <ecNumber>1.1.1.-</ecNumber>
    </recommendedName>
</protein>
<proteinExistence type="inferred from homology"/>
<feature type="chain" id="PRO_0000087819" description="Probable NADH-dependent butanol dehydrogenase 1">
    <location>
        <begin position="1"/>
        <end position="387"/>
    </location>
</feature>
<sequence length="387" mass="42733">MQNFTYWNPTKLIFGRGEVERLPEELKPYGKNVLLVYGGGSIKRSGLYDQVIEQLNKAGATVHELAGVEPNPRVSTVNKGVAICKEQNIDFLLAVGGGSVIDCTKAIAAGAKYDGDAWDIVTKKHQPKDALPFGTVLTLAATGSEMNSGSVITNWETKEKYGWGSPLVFPKFSILDPVNTFTVPKNHTIYGMVDMMSHVFEQYFHHVSNTPYQDRMCESLLRTVIETAPKLINDLENYELRETILYTGTIALNGMLSMGARGDWATHNIEHAVSAVYDIPHAGGLAILFPNWMRHTLSENPARMKQLAVRVFDVEEAGKTDEEIALEGIDKLSAFWTSLGAPNRLADYDINDEQLDTIADKAMANGTFGQFKSLNKEDVLSILKASL</sequence>
<evidence type="ECO:0000305" key="1"/>
<accession>O05239</accession>
<keyword id="KW-0520">NAD</keyword>
<keyword id="KW-0560">Oxidoreductase</keyword>
<keyword id="KW-1185">Reference proteome</keyword>
<dbReference type="EC" id="1.1.1.-"/>
<dbReference type="EMBL" id="Z93934">
    <property type="protein sequence ID" value="CAB07922.1"/>
    <property type="molecule type" value="Genomic_DNA"/>
</dbReference>
<dbReference type="EMBL" id="AL009126">
    <property type="protein sequence ID" value="CAB15126.1"/>
    <property type="molecule type" value="Genomic_DNA"/>
</dbReference>
<dbReference type="PIR" id="A70011">
    <property type="entry name" value="A70011"/>
</dbReference>
<dbReference type="RefSeq" id="WP_003228869.1">
    <property type="nucleotide sequence ID" value="NZ_OZ025638.1"/>
</dbReference>
<dbReference type="SMR" id="O05239"/>
<dbReference type="FunCoup" id="O05239">
    <property type="interactions" value="32"/>
</dbReference>
<dbReference type="IntAct" id="O05239">
    <property type="interactions" value="1"/>
</dbReference>
<dbReference type="MINT" id="O05239"/>
<dbReference type="STRING" id="224308.BSU31370"/>
<dbReference type="jPOST" id="O05239"/>
<dbReference type="PaxDb" id="224308-BSU31370"/>
<dbReference type="EnsemblBacteria" id="CAB15126">
    <property type="protein sequence ID" value="CAB15126"/>
    <property type="gene ID" value="BSU_31370"/>
</dbReference>
<dbReference type="GeneID" id="937164"/>
<dbReference type="KEGG" id="bsu:BSU31370"/>
<dbReference type="PATRIC" id="fig|224308.179.peg.3401"/>
<dbReference type="eggNOG" id="COG1979">
    <property type="taxonomic scope" value="Bacteria"/>
</dbReference>
<dbReference type="InParanoid" id="O05239"/>
<dbReference type="OrthoDB" id="9801156at2"/>
<dbReference type="PhylomeDB" id="O05239"/>
<dbReference type="BioCyc" id="BSUB:BSU31370-MONOMER"/>
<dbReference type="UniPathway" id="UPA00743"/>
<dbReference type="Proteomes" id="UP000001570">
    <property type="component" value="Chromosome"/>
</dbReference>
<dbReference type="GO" id="GO:0005829">
    <property type="term" value="C:cytosol"/>
    <property type="evidence" value="ECO:0000318"/>
    <property type="project" value="GO_Central"/>
</dbReference>
<dbReference type="GO" id="GO:0008106">
    <property type="term" value="F:alcohol dehydrogenase (NADP+) activity"/>
    <property type="evidence" value="ECO:0000318"/>
    <property type="project" value="GO_Central"/>
</dbReference>
<dbReference type="GO" id="GO:1990362">
    <property type="term" value="F:butanol dehydrogenase (NAD+) activity"/>
    <property type="evidence" value="ECO:0007669"/>
    <property type="project" value="InterPro"/>
</dbReference>
<dbReference type="GO" id="GO:0046872">
    <property type="term" value="F:metal ion binding"/>
    <property type="evidence" value="ECO:0007669"/>
    <property type="project" value="InterPro"/>
</dbReference>
<dbReference type="GO" id="GO:1990002">
    <property type="term" value="F:methylglyoxal reductase (NADPH) (acetol producing) activity"/>
    <property type="evidence" value="ECO:0000318"/>
    <property type="project" value="GO_Central"/>
</dbReference>
<dbReference type="GO" id="GO:0071271">
    <property type="term" value="P:1-butanol biosynthetic process"/>
    <property type="evidence" value="ECO:0007669"/>
    <property type="project" value="UniProtKB-UniPathway"/>
</dbReference>
<dbReference type="CDD" id="cd08187">
    <property type="entry name" value="BDH"/>
    <property type="match status" value="1"/>
</dbReference>
<dbReference type="FunFam" id="3.40.50.1970:FF:000003">
    <property type="entry name" value="Alcohol dehydrogenase, iron-containing"/>
    <property type="match status" value="1"/>
</dbReference>
<dbReference type="FunFam" id="1.20.1090.10:FF:000009">
    <property type="entry name" value="NADH-dependent butanol dehydrogenase"/>
    <property type="match status" value="1"/>
</dbReference>
<dbReference type="Gene3D" id="3.40.50.1970">
    <property type="match status" value="1"/>
</dbReference>
<dbReference type="Gene3D" id="1.20.1090.10">
    <property type="entry name" value="Dehydroquinate synthase-like - alpha domain"/>
    <property type="match status" value="1"/>
</dbReference>
<dbReference type="InterPro" id="IPR001670">
    <property type="entry name" value="ADH_Fe/GldA"/>
</dbReference>
<dbReference type="InterPro" id="IPR056798">
    <property type="entry name" value="ADH_Fe_C"/>
</dbReference>
<dbReference type="InterPro" id="IPR018211">
    <property type="entry name" value="ADH_Fe_CS"/>
</dbReference>
<dbReference type="InterPro" id="IPR044731">
    <property type="entry name" value="BDH-like"/>
</dbReference>
<dbReference type="PANTHER" id="PTHR43633">
    <property type="entry name" value="ALCOHOL DEHYDROGENASE YQHD"/>
    <property type="match status" value="1"/>
</dbReference>
<dbReference type="PANTHER" id="PTHR43633:SF1">
    <property type="entry name" value="ALCOHOL DEHYDROGENASE YQHD"/>
    <property type="match status" value="1"/>
</dbReference>
<dbReference type="Pfam" id="PF25137">
    <property type="entry name" value="ADH_Fe_C"/>
    <property type="match status" value="1"/>
</dbReference>
<dbReference type="Pfam" id="PF00465">
    <property type="entry name" value="Fe-ADH"/>
    <property type="match status" value="1"/>
</dbReference>
<dbReference type="SUPFAM" id="SSF56796">
    <property type="entry name" value="Dehydroquinate synthase-like"/>
    <property type="match status" value="1"/>
</dbReference>
<dbReference type="PROSITE" id="PS00913">
    <property type="entry name" value="ADH_IRON_1"/>
    <property type="match status" value="1"/>
</dbReference>
<dbReference type="PROSITE" id="PS00060">
    <property type="entry name" value="ADH_IRON_2"/>
    <property type="match status" value="1"/>
</dbReference>
<comment type="pathway">
    <text>Alcohol metabolism; butanol biosynthesis.</text>
</comment>
<comment type="similarity">
    <text evidence="1">Belongs to the iron-containing alcohol dehydrogenase family.</text>
</comment>
<gene>
    <name type="primary">yugJ</name>
    <name type="ordered locus">BSU31370</name>
</gene>
<reference key="1">
    <citation type="journal article" date="1997" name="Microbiology">
        <title>Analysis of the Bacillus subtilis genome: cloning and nucleotide sequence of a 62 kb region between 275 degrees (rrnB) and 284 degrees (pai).</title>
        <authorList>
            <person name="Oudega B."/>
            <person name="Koningstein G."/>
            <person name="Rodrigues L."/>
            <person name="de Sales Ramon M."/>
            <person name="Hilbert H."/>
            <person name="Duesterhoeft A."/>
            <person name="Pohl T.M."/>
            <person name="Weitzenegger T."/>
        </authorList>
    </citation>
    <scope>NUCLEOTIDE SEQUENCE [GENOMIC DNA]</scope>
    <source>
        <strain>168</strain>
    </source>
</reference>
<reference key="2">
    <citation type="journal article" date="1997" name="Nature">
        <title>The complete genome sequence of the Gram-positive bacterium Bacillus subtilis.</title>
        <authorList>
            <person name="Kunst F."/>
            <person name="Ogasawara N."/>
            <person name="Moszer I."/>
            <person name="Albertini A.M."/>
            <person name="Alloni G."/>
            <person name="Azevedo V."/>
            <person name="Bertero M.G."/>
            <person name="Bessieres P."/>
            <person name="Bolotin A."/>
            <person name="Borchert S."/>
            <person name="Borriss R."/>
            <person name="Boursier L."/>
            <person name="Brans A."/>
            <person name="Braun M."/>
            <person name="Brignell S.C."/>
            <person name="Bron S."/>
            <person name="Brouillet S."/>
            <person name="Bruschi C.V."/>
            <person name="Caldwell B."/>
            <person name="Capuano V."/>
            <person name="Carter N.M."/>
            <person name="Choi S.-K."/>
            <person name="Codani J.-J."/>
            <person name="Connerton I.F."/>
            <person name="Cummings N.J."/>
            <person name="Daniel R.A."/>
            <person name="Denizot F."/>
            <person name="Devine K.M."/>
            <person name="Duesterhoeft A."/>
            <person name="Ehrlich S.D."/>
            <person name="Emmerson P.T."/>
            <person name="Entian K.-D."/>
            <person name="Errington J."/>
            <person name="Fabret C."/>
            <person name="Ferrari E."/>
            <person name="Foulger D."/>
            <person name="Fritz C."/>
            <person name="Fujita M."/>
            <person name="Fujita Y."/>
            <person name="Fuma S."/>
            <person name="Galizzi A."/>
            <person name="Galleron N."/>
            <person name="Ghim S.-Y."/>
            <person name="Glaser P."/>
            <person name="Goffeau A."/>
            <person name="Golightly E.J."/>
            <person name="Grandi G."/>
            <person name="Guiseppi G."/>
            <person name="Guy B.J."/>
            <person name="Haga K."/>
            <person name="Haiech J."/>
            <person name="Harwood C.R."/>
            <person name="Henaut A."/>
            <person name="Hilbert H."/>
            <person name="Holsappel S."/>
            <person name="Hosono S."/>
            <person name="Hullo M.-F."/>
            <person name="Itaya M."/>
            <person name="Jones L.-M."/>
            <person name="Joris B."/>
            <person name="Karamata D."/>
            <person name="Kasahara Y."/>
            <person name="Klaerr-Blanchard M."/>
            <person name="Klein C."/>
            <person name="Kobayashi Y."/>
            <person name="Koetter P."/>
            <person name="Koningstein G."/>
            <person name="Krogh S."/>
            <person name="Kumano M."/>
            <person name="Kurita K."/>
            <person name="Lapidus A."/>
            <person name="Lardinois S."/>
            <person name="Lauber J."/>
            <person name="Lazarevic V."/>
            <person name="Lee S.-M."/>
            <person name="Levine A."/>
            <person name="Liu H."/>
            <person name="Masuda S."/>
            <person name="Mauel C."/>
            <person name="Medigue C."/>
            <person name="Medina N."/>
            <person name="Mellado R.P."/>
            <person name="Mizuno M."/>
            <person name="Moestl D."/>
            <person name="Nakai S."/>
            <person name="Noback M."/>
            <person name="Noone D."/>
            <person name="O'Reilly M."/>
            <person name="Ogawa K."/>
            <person name="Ogiwara A."/>
            <person name="Oudega B."/>
            <person name="Park S.-H."/>
            <person name="Parro V."/>
            <person name="Pohl T.M."/>
            <person name="Portetelle D."/>
            <person name="Porwollik S."/>
            <person name="Prescott A.M."/>
            <person name="Presecan E."/>
            <person name="Pujic P."/>
            <person name="Purnelle B."/>
            <person name="Rapoport G."/>
            <person name="Rey M."/>
            <person name="Reynolds S."/>
            <person name="Rieger M."/>
            <person name="Rivolta C."/>
            <person name="Rocha E."/>
            <person name="Roche B."/>
            <person name="Rose M."/>
            <person name="Sadaie Y."/>
            <person name="Sato T."/>
            <person name="Scanlan E."/>
            <person name="Schleich S."/>
            <person name="Schroeter R."/>
            <person name="Scoffone F."/>
            <person name="Sekiguchi J."/>
            <person name="Sekowska A."/>
            <person name="Seror S.J."/>
            <person name="Serror P."/>
            <person name="Shin B.-S."/>
            <person name="Soldo B."/>
            <person name="Sorokin A."/>
            <person name="Tacconi E."/>
            <person name="Takagi T."/>
            <person name="Takahashi H."/>
            <person name="Takemaru K."/>
            <person name="Takeuchi M."/>
            <person name="Tamakoshi A."/>
            <person name="Tanaka T."/>
            <person name="Terpstra P."/>
            <person name="Tognoni A."/>
            <person name="Tosato V."/>
            <person name="Uchiyama S."/>
            <person name="Vandenbol M."/>
            <person name="Vannier F."/>
            <person name="Vassarotti A."/>
            <person name="Viari A."/>
            <person name="Wambutt R."/>
            <person name="Wedler E."/>
            <person name="Wedler H."/>
            <person name="Weitzenegger T."/>
            <person name="Winters P."/>
            <person name="Wipat A."/>
            <person name="Yamamoto H."/>
            <person name="Yamane K."/>
            <person name="Yasumoto K."/>
            <person name="Yata K."/>
            <person name="Yoshida K."/>
            <person name="Yoshikawa H.-F."/>
            <person name="Zumstein E."/>
            <person name="Yoshikawa H."/>
            <person name="Danchin A."/>
        </authorList>
    </citation>
    <scope>NUCLEOTIDE SEQUENCE [LARGE SCALE GENOMIC DNA]</scope>
    <source>
        <strain>168</strain>
    </source>
</reference>
<name>YUGJ_BACSU</name>
<organism>
    <name type="scientific">Bacillus subtilis (strain 168)</name>
    <dbReference type="NCBI Taxonomy" id="224308"/>
    <lineage>
        <taxon>Bacteria</taxon>
        <taxon>Bacillati</taxon>
        <taxon>Bacillota</taxon>
        <taxon>Bacilli</taxon>
        <taxon>Bacillales</taxon>
        <taxon>Bacillaceae</taxon>
        <taxon>Bacillus</taxon>
    </lineage>
</organism>